<organism>
    <name type="scientific">Prochlorococcus marinus (strain MIT 9303)</name>
    <dbReference type="NCBI Taxonomy" id="59922"/>
    <lineage>
        <taxon>Bacteria</taxon>
        <taxon>Bacillati</taxon>
        <taxon>Cyanobacteriota</taxon>
        <taxon>Cyanophyceae</taxon>
        <taxon>Synechococcales</taxon>
        <taxon>Prochlorococcaceae</taxon>
        <taxon>Prochlorococcus</taxon>
    </lineage>
</organism>
<keyword id="KW-0090">Biological rhythms</keyword>
<accession>A2C735</accession>
<evidence type="ECO:0000255" key="1">
    <source>
        <dbReference type="HAMAP-Rule" id="MF_01835"/>
    </source>
</evidence>
<sequence length="119" mass="13280">MSPRKTYILKLYVAGNTPNSMRALKTLRDILENEFRGVYALKVIDVLKNPQLAEEDKILATPTLAKILPPPVRRIIGDLSDRERVLIGLDLLYDEISEEMLGSAELDTLADDDIASPDS</sequence>
<reference key="1">
    <citation type="journal article" date="2007" name="PLoS Genet.">
        <title>Patterns and implications of gene gain and loss in the evolution of Prochlorococcus.</title>
        <authorList>
            <person name="Kettler G.C."/>
            <person name="Martiny A.C."/>
            <person name="Huang K."/>
            <person name="Zucker J."/>
            <person name="Coleman M.L."/>
            <person name="Rodrigue S."/>
            <person name="Chen F."/>
            <person name="Lapidus A."/>
            <person name="Ferriera S."/>
            <person name="Johnson J."/>
            <person name="Steglich C."/>
            <person name="Church G.M."/>
            <person name="Richardson P."/>
            <person name="Chisholm S.W."/>
        </authorList>
    </citation>
    <scope>NUCLEOTIDE SEQUENCE [LARGE SCALE GENOMIC DNA]</scope>
    <source>
        <strain>MIT 9303</strain>
    </source>
</reference>
<comment type="function">
    <text evidence="1">Component of the KaiBC clock protein complex, which constitutes the main circadian regulator in cyanobacteria; it may modify the ATPase activity of KaiC.</text>
</comment>
<comment type="function">
    <text evidence="1">May be a metamorphic protein which reversibly switches between an inactive tetrameric fold and a rare, thioredoxin-like monomeric fold (KaiB(fs)). KaiB(fs) binds phospho-KaiC, and perhaps clock output effectors.</text>
</comment>
<comment type="subunit">
    <text evidence="1">May undergo a major conformational rearrangment; in the free state forms homooligomers. When bound to KaiC switches to a monomeric thioredoxin-fold (KaiB(fs)). The active oscillator complex is probably KaiC(6):KaiB(6).</text>
</comment>
<comment type="domain">
    <text evidence="1">Has 2 forms, fold switches to a thioredoxin-like fold (KaiB(fs)) when bound to KaiC.</text>
</comment>
<comment type="miscellaneous">
    <text evidence="1">The kiaA gene has been eliminated from Prochlorococcus during genome streamlining. It has been suggested that the central oscillator in Prochlorococcus does not have to be as robust as in other cyanobacteria because the former live in specific niches of the Earth's oceans; they divide exactly once a day and at the same time. Thus gene loss and changes in kaiB function compared to other cyanobacteria, can occur.</text>
</comment>
<comment type="similarity">
    <text evidence="1">Belongs to the KaiB family.</text>
</comment>
<dbReference type="EMBL" id="CP000554">
    <property type="protein sequence ID" value="ABM77295.1"/>
    <property type="molecule type" value="Genomic_DNA"/>
</dbReference>
<dbReference type="RefSeq" id="WP_011825217.1">
    <property type="nucleotide sequence ID" value="NC_008820.1"/>
</dbReference>
<dbReference type="SMR" id="A2C735"/>
<dbReference type="STRING" id="59922.P9303_05431"/>
<dbReference type="KEGG" id="pmf:P9303_05431"/>
<dbReference type="HOGENOM" id="CLU_144073_0_0_3"/>
<dbReference type="BioCyc" id="PMAR59922:G1G80-499-MONOMER"/>
<dbReference type="Proteomes" id="UP000002274">
    <property type="component" value="Chromosome"/>
</dbReference>
<dbReference type="GO" id="GO:0007623">
    <property type="term" value="P:circadian rhythm"/>
    <property type="evidence" value="ECO:0007669"/>
    <property type="project" value="UniProtKB-UniRule"/>
</dbReference>
<dbReference type="CDD" id="cd02978">
    <property type="entry name" value="KaiB_like"/>
    <property type="match status" value="1"/>
</dbReference>
<dbReference type="Gene3D" id="3.40.30.10">
    <property type="entry name" value="Glutaredoxin"/>
    <property type="match status" value="1"/>
</dbReference>
<dbReference type="HAMAP" id="MF_01835">
    <property type="entry name" value="KaiB"/>
    <property type="match status" value="1"/>
</dbReference>
<dbReference type="InterPro" id="IPR013474">
    <property type="entry name" value="Circ_KaiB"/>
</dbReference>
<dbReference type="InterPro" id="IPR039022">
    <property type="entry name" value="KaiB-like"/>
</dbReference>
<dbReference type="InterPro" id="IPR011649">
    <property type="entry name" value="KaiB_domain"/>
</dbReference>
<dbReference type="InterPro" id="IPR036249">
    <property type="entry name" value="Thioredoxin-like_sf"/>
</dbReference>
<dbReference type="NCBIfam" id="TIGR02654">
    <property type="entry name" value="circ_KaiB"/>
    <property type="match status" value="1"/>
</dbReference>
<dbReference type="NCBIfam" id="NF006798">
    <property type="entry name" value="PRK09301.1"/>
    <property type="match status" value="1"/>
</dbReference>
<dbReference type="PANTHER" id="PTHR41709:SF2">
    <property type="entry name" value="CIRCADIAN CLOCK PROTEIN KAIB2"/>
    <property type="match status" value="1"/>
</dbReference>
<dbReference type="PANTHER" id="PTHR41709">
    <property type="entry name" value="KAIB-LIKE PROTEIN 1"/>
    <property type="match status" value="1"/>
</dbReference>
<dbReference type="Pfam" id="PF07689">
    <property type="entry name" value="KaiB"/>
    <property type="match status" value="1"/>
</dbReference>
<dbReference type="SMART" id="SM01248">
    <property type="entry name" value="KaiB"/>
    <property type="match status" value="1"/>
</dbReference>
<dbReference type="SUPFAM" id="SSF52833">
    <property type="entry name" value="Thioredoxin-like"/>
    <property type="match status" value="1"/>
</dbReference>
<name>KAIB_PROM3</name>
<protein>
    <recommendedName>
        <fullName evidence="1">Circadian clock oscillator protein KaiB</fullName>
    </recommendedName>
</protein>
<gene>
    <name evidence="1" type="primary">kaiB</name>
    <name type="ordered locus">P9303_05431</name>
</gene>
<proteinExistence type="inferred from homology"/>
<feature type="chain" id="PRO_1000070457" description="Circadian clock oscillator protein KaiB">
    <location>
        <begin position="1"/>
        <end position="119"/>
    </location>
</feature>